<keyword id="KW-0004">4Fe-4S</keyword>
<keyword id="KW-0013">ADP-ribosylation</keyword>
<keyword id="KW-0067">ATP-binding</keyword>
<keyword id="KW-0408">Iron</keyword>
<keyword id="KW-0411">Iron-sulfur</keyword>
<keyword id="KW-0479">Metal-binding</keyword>
<keyword id="KW-0535">Nitrogen fixation</keyword>
<keyword id="KW-0547">Nucleotide-binding</keyword>
<keyword id="KW-0560">Oxidoreductase</keyword>
<accession>O34106</accession>
<accession>Q10X80</accession>
<comment type="function">
    <text evidence="1">The key enzymatic reactions in nitrogen fixation are catalyzed by the nitrogenase complex, which has 2 components: the iron protein and the molybdenum-iron protein.</text>
</comment>
<comment type="catalytic activity">
    <reaction>
        <text>N2 + 8 reduced [2Fe-2S]-[ferredoxin] + 16 ATP + 16 H2O = H2 + 8 oxidized [2Fe-2S]-[ferredoxin] + 2 NH4(+) + 16 ADP + 16 phosphate + 6 H(+)</text>
        <dbReference type="Rhea" id="RHEA:21448"/>
        <dbReference type="Rhea" id="RHEA-COMP:10000"/>
        <dbReference type="Rhea" id="RHEA-COMP:10001"/>
        <dbReference type="ChEBI" id="CHEBI:15377"/>
        <dbReference type="ChEBI" id="CHEBI:15378"/>
        <dbReference type="ChEBI" id="CHEBI:17997"/>
        <dbReference type="ChEBI" id="CHEBI:18276"/>
        <dbReference type="ChEBI" id="CHEBI:28938"/>
        <dbReference type="ChEBI" id="CHEBI:30616"/>
        <dbReference type="ChEBI" id="CHEBI:33737"/>
        <dbReference type="ChEBI" id="CHEBI:33738"/>
        <dbReference type="ChEBI" id="CHEBI:43474"/>
        <dbReference type="ChEBI" id="CHEBI:456216"/>
        <dbReference type="EC" id="1.18.6.1"/>
    </reaction>
</comment>
<comment type="cofactor">
    <cofactor evidence="1">
        <name>[4Fe-4S] cluster</name>
        <dbReference type="ChEBI" id="CHEBI:49883"/>
    </cofactor>
    <text evidence="1">Binds 1 [4Fe-4S] cluster per dimer.</text>
</comment>
<comment type="subunit">
    <text evidence="1">Homodimer.</text>
</comment>
<comment type="PTM">
    <text evidence="1">The reversible ADP-ribosylation of Arg-100 inactivates the nitrogenase reductase and regulates nitrogenase activity.</text>
</comment>
<comment type="similarity">
    <text evidence="3">Belongs to the NifH/BchL/ChlL family.</text>
</comment>
<reference key="1">
    <citation type="journal article" date="1997" name="FEMS Microbiol. Lett.">
        <title>Structural analysis of the Trichodesmium nitrogenase iron protein: implications for aerobic nitrogen fixation activity.</title>
        <authorList>
            <person name="Zehr J.P."/>
            <person name="Harris D."/>
            <person name="Dominic B."/>
            <person name="Salerno J."/>
        </authorList>
    </citation>
    <scope>NUCLEOTIDE SEQUENCE [GENOMIC DNA]</scope>
</reference>
<reference key="2">
    <citation type="submission" date="1997-07" db="EMBL/GenBank/DDBJ databases">
        <title>Cloning, sequencing and transcriptional analysis of contiguous nifHDK operon reveals unexpected nifD, nifDK and nifK transcripts in Trichodesmium sp. IMS101.</title>
        <authorList>
            <person name="Dominic B."/>
            <person name="Zehr J.P."/>
        </authorList>
    </citation>
    <scope>NUCLEOTIDE SEQUENCE [GENOMIC DNA]</scope>
</reference>
<reference key="3">
    <citation type="submission" date="1999-07" db="EMBL/GenBank/DDBJ databases">
        <title>Organization of the nif genes of the nonheterocystous cyanobacterium Trichodesmium sp. IMS101.</title>
        <authorList>
            <person name="Dominic B."/>
            <person name="Zani S."/>
            <person name="Chen Y.-B."/>
            <person name="Mellon M.T."/>
            <person name="Zehr J.P."/>
        </authorList>
    </citation>
    <scope>NUCLEOTIDE SEQUENCE [GENOMIC DNA]</scope>
</reference>
<reference key="4">
    <citation type="journal article" date="2015" name="Proc. Natl. Acad. Sci. U.S.A.">
        <title>Trichodesmium genome maintains abundant, widespread noncoding DNA in situ, despite oligotrophic lifestyle.</title>
        <authorList>
            <person name="Walworth N."/>
            <person name="Pfreundt U."/>
            <person name="Nelson W.C."/>
            <person name="Mincer T."/>
            <person name="Heidelberg J.F."/>
            <person name="Fu F."/>
            <person name="Waterbury J.B."/>
            <person name="Glavina del Rio T."/>
            <person name="Goodwin L."/>
            <person name="Kyrpides N.C."/>
            <person name="Land M.L."/>
            <person name="Woyke T."/>
            <person name="Hutchins D.A."/>
            <person name="Hess W.R."/>
            <person name="Webb E.A."/>
        </authorList>
    </citation>
    <scope>NUCLEOTIDE SEQUENCE [LARGE SCALE GENOMIC DNA]</scope>
    <source>
        <strain>IMS101</strain>
    </source>
</reference>
<sequence length="296" mass="32231">MRQIAFYGKGGIGKSTTSQNTLAAMANRHGQRIMIVGCDPKADSTRLILNAKAQTTVLHVAAERGAVEDVELDEVLKPGFGGIKCVESGGPEPGVGCAGRGIITAINFLEEEGAYTDLDFVSYDVLGDVVCGGFAMPIRENKAQEIYIVCSGEMMAMYAANNIARGVLKYAHAGGVRLGGLICNSRKVDRETELIENLAARLNTQMIHFVPRDNVVQRAEIRRMTVEQYAPEDNQAQEYDQLAQKIINNEKLTIPTPLEMDELEELLIEFGLLGDEEDRQKQIAAQDAAIKATAAK</sequence>
<name>NIFH_TRIEI</name>
<gene>
    <name type="primary">nifH</name>
    <name type="ordered locus">Tery_4136</name>
</gene>
<feature type="chain" id="PRO_0000139533" description="Nitrogenase iron protein">
    <location>
        <begin position="1"/>
        <end position="296"/>
    </location>
</feature>
<feature type="binding site" evidence="2">
    <location>
        <begin position="8"/>
        <end position="15"/>
    </location>
    <ligand>
        <name>ATP</name>
        <dbReference type="ChEBI" id="CHEBI:30616"/>
    </ligand>
</feature>
<feature type="binding site" evidence="1">
    <location>
        <position position="97"/>
    </location>
    <ligand>
        <name>[4Fe-4S] cluster</name>
        <dbReference type="ChEBI" id="CHEBI:49883"/>
        <note>ligand shared between dimeric partners</note>
    </ligand>
</feature>
<feature type="binding site" evidence="1">
    <location>
        <position position="131"/>
    </location>
    <ligand>
        <name>[4Fe-4S] cluster</name>
        <dbReference type="ChEBI" id="CHEBI:49883"/>
        <note>ligand shared between dimeric partners</note>
    </ligand>
</feature>
<feature type="modified residue" description="ADP-ribosylarginine; by dinitrogenase reductase ADP-ribosyltransferase" evidence="1">
    <location>
        <position position="100"/>
    </location>
</feature>
<organism>
    <name type="scientific">Trichodesmium erythraeum (strain IMS101)</name>
    <dbReference type="NCBI Taxonomy" id="203124"/>
    <lineage>
        <taxon>Bacteria</taxon>
        <taxon>Bacillati</taxon>
        <taxon>Cyanobacteriota</taxon>
        <taxon>Cyanophyceae</taxon>
        <taxon>Oscillatoriophycideae</taxon>
        <taxon>Oscillatoriales</taxon>
        <taxon>Microcoleaceae</taxon>
        <taxon>Trichodesmium</taxon>
    </lineage>
</organism>
<dbReference type="EC" id="1.18.6.1"/>
<dbReference type="EMBL" id="U90952">
    <property type="protein sequence ID" value="AAB70120.1"/>
    <property type="molecule type" value="Genomic_DNA"/>
</dbReference>
<dbReference type="EMBL" id="AF016484">
    <property type="protein sequence ID" value="AAD03796.1"/>
    <property type="molecule type" value="Genomic_DNA"/>
</dbReference>
<dbReference type="EMBL" id="AF167538">
    <property type="protein sequence ID" value="AAF82637.1"/>
    <property type="molecule type" value="Genomic_DNA"/>
</dbReference>
<dbReference type="EMBL" id="CP000393">
    <property type="protein sequence ID" value="ABG53144.1"/>
    <property type="molecule type" value="Genomic_DNA"/>
</dbReference>
<dbReference type="RefSeq" id="WP_011613474.1">
    <property type="nucleotide sequence ID" value="NC_008312.1"/>
</dbReference>
<dbReference type="SMR" id="O34106"/>
<dbReference type="STRING" id="203124.Tery_4136"/>
<dbReference type="KEGG" id="ter:Tery_4136"/>
<dbReference type="eggNOG" id="COG1348">
    <property type="taxonomic scope" value="Bacteria"/>
</dbReference>
<dbReference type="HOGENOM" id="CLU_059373_0_0_3"/>
<dbReference type="OrthoDB" id="9778641at2"/>
<dbReference type="GO" id="GO:0051539">
    <property type="term" value="F:4 iron, 4 sulfur cluster binding"/>
    <property type="evidence" value="ECO:0007669"/>
    <property type="project" value="UniProtKB-KW"/>
</dbReference>
<dbReference type="GO" id="GO:0005524">
    <property type="term" value="F:ATP binding"/>
    <property type="evidence" value="ECO:0007669"/>
    <property type="project" value="UniProtKB-UniRule"/>
</dbReference>
<dbReference type="GO" id="GO:0046872">
    <property type="term" value="F:metal ion binding"/>
    <property type="evidence" value="ECO:0007669"/>
    <property type="project" value="UniProtKB-KW"/>
</dbReference>
<dbReference type="GO" id="GO:0016163">
    <property type="term" value="F:nitrogenase activity"/>
    <property type="evidence" value="ECO:0007669"/>
    <property type="project" value="UniProtKB-UniRule"/>
</dbReference>
<dbReference type="GO" id="GO:0009399">
    <property type="term" value="P:nitrogen fixation"/>
    <property type="evidence" value="ECO:0007669"/>
    <property type="project" value="UniProtKB-UniRule"/>
</dbReference>
<dbReference type="CDD" id="cd02040">
    <property type="entry name" value="NifH"/>
    <property type="match status" value="1"/>
</dbReference>
<dbReference type="FunFam" id="3.40.50.300:FF:001379">
    <property type="entry name" value="Nitrogenase iron protein 1"/>
    <property type="match status" value="1"/>
</dbReference>
<dbReference type="Gene3D" id="3.40.50.300">
    <property type="entry name" value="P-loop containing nucleotide triphosphate hydrolases"/>
    <property type="match status" value="1"/>
</dbReference>
<dbReference type="HAMAP" id="MF_00533">
    <property type="entry name" value="NifH"/>
    <property type="match status" value="1"/>
</dbReference>
<dbReference type="InterPro" id="IPR030655">
    <property type="entry name" value="NifH/chlL_CS"/>
</dbReference>
<dbReference type="InterPro" id="IPR000392">
    <property type="entry name" value="NifH/frxC"/>
</dbReference>
<dbReference type="InterPro" id="IPR005977">
    <property type="entry name" value="Nitrogenase_Fe_NifH"/>
</dbReference>
<dbReference type="InterPro" id="IPR027417">
    <property type="entry name" value="P-loop_NTPase"/>
</dbReference>
<dbReference type="NCBIfam" id="TIGR01287">
    <property type="entry name" value="nifH"/>
    <property type="match status" value="1"/>
</dbReference>
<dbReference type="PANTHER" id="PTHR42864">
    <property type="entry name" value="LIGHT-INDEPENDENT PROTOCHLOROPHYLLIDE REDUCTASE IRON-SULFUR ATP-BINDING PROTEIN"/>
    <property type="match status" value="1"/>
</dbReference>
<dbReference type="PANTHER" id="PTHR42864:SF2">
    <property type="entry name" value="LIGHT-INDEPENDENT PROTOCHLOROPHYLLIDE REDUCTASE IRON-SULFUR ATP-BINDING PROTEIN"/>
    <property type="match status" value="1"/>
</dbReference>
<dbReference type="Pfam" id="PF00142">
    <property type="entry name" value="Fer4_NifH"/>
    <property type="match status" value="1"/>
</dbReference>
<dbReference type="PIRSF" id="PIRSF000363">
    <property type="entry name" value="Nitrogenase_iron"/>
    <property type="match status" value="1"/>
</dbReference>
<dbReference type="PRINTS" id="PR00091">
    <property type="entry name" value="NITROGNASEII"/>
</dbReference>
<dbReference type="SUPFAM" id="SSF52540">
    <property type="entry name" value="P-loop containing nucleoside triphosphate hydrolases"/>
    <property type="match status" value="1"/>
</dbReference>
<dbReference type="PROSITE" id="PS00746">
    <property type="entry name" value="NIFH_FRXC_1"/>
    <property type="match status" value="1"/>
</dbReference>
<dbReference type="PROSITE" id="PS00692">
    <property type="entry name" value="NIFH_FRXC_2"/>
    <property type="match status" value="1"/>
</dbReference>
<dbReference type="PROSITE" id="PS51026">
    <property type="entry name" value="NIFH_FRXC_3"/>
    <property type="match status" value="1"/>
</dbReference>
<evidence type="ECO:0000250" key="1"/>
<evidence type="ECO:0000255" key="2"/>
<evidence type="ECO:0000305" key="3"/>
<protein>
    <recommendedName>
        <fullName>Nitrogenase iron protein</fullName>
        <ecNumber>1.18.6.1</ecNumber>
    </recommendedName>
    <alternativeName>
        <fullName>Nitrogenase Fe protein</fullName>
    </alternativeName>
    <alternativeName>
        <fullName>Nitrogenase component II</fullName>
    </alternativeName>
    <alternativeName>
        <fullName>Nitrogenase reductase</fullName>
    </alternativeName>
</protein>
<proteinExistence type="inferred from homology"/>